<sequence length="570" mass="64688">MNRIISINGPLVIAKGKFSIFEVVRVGEEKLIGEVIGIENDKAYIQVYEDTNGLKVGEPVFNTGKPLTIELGPGLLANIFDGLGRPLKDIYEKTQSIYIPKGIDLPTLDRKKVWEFIPKKKKGDTIKGGDIIGTVNENGFEHRIIVPPNVEGKIEEIYEGNFTIEETIAIVNGKPIKLYHEWPIRKPRPYKEKLDYNYPFITGTRVLDIMFPIAKGGSAAVPGPFGSGKTVLNQQIAKWADSDIVIYIGCGERGNEMTEVLEEFPKLKDPKTGKPLMYRTILIANTSNMPIAAREASIYLGATIGEYFRDQGYSVVVNADSTSRWAEALREISSRLGEIPSEEGYPAYLLRKLAEFYERSGRVRTLNDLEGSLTIIGAVSPPGGDFSEPVTQNTLRLVGALWALDSKLAYKRHYPAINYLISYTKQWEFVKKYFEELYEDVIEIREEFFAILKRESELMDIVSIVGPDALSDNEKIYLHMGRIIREGFLQQDAFDENDSYSPLEKTIELMRIIHKYYVTVKQLLGKIPLEEIEQKGIHEKIIKLRYKSLKEFREEIKAIEQEILSLLNSQ</sequence>
<keyword id="KW-0002">3D-structure</keyword>
<keyword id="KW-0066">ATP synthesis</keyword>
<keyword id="KW-0067">ATP-binding</keyword>
<keyword id="KW-1003">Cell membrane</keyword>
<keyword id="KW-0375">Hydrogen ion transport</keyword>
<keyword id="KW-0406">Ion transport</keyword>
<keyword id="KW-0472">Membrane</keyword>
<keyword id="KW-0547">Nucleotide-binding</keyword>
<keyword id="KW-1185">Reference proteome</keyword>
<keyword id="KW-1278">Translocase</keyword>
<keyword id="KW-0813">Transport</keyword>
<name>AATA_NANEQ</name>
<comment type="function">
    <text evidence="1">Component of the A-type ATP synthase that produces ATP from ADP in the presence of a proton gradient across the membrane. The A chain is the catalytic subunit.</text>
</comment>
<comment type="catalytic activity">
    <reaction evidence="1">
        <text>ATP + H2O + 4 H(+)(in) = ADP + phosphate + 5 H(+)(out)</text>
        <dbReference type="Rhea" id="RHEA:57720"/>
        <dbReference type="ChEBI" id="CHEBI:15377"/>
        <dbReference type="ChEBI" id="CHEBI:15378"/>
        <dbReference type="ChEBI" id="CHEBI:30616"/>
        <dbReference type="ChEBI" id="CHEBI:43474"/>
        <dbReference type="ChEBI" id="CHEBI:456216"/>
        <dbReference type="EC" id="7.1.2.2"/>
    </reaction>
</comment>
<comment type="subunit">
    <text evidence="1">Has multiple subunits with at least A(3), B(3), C, D, E, F, H, I and proteolipid K(x).</text>
</comment>
<comment type="subcellular location">
    <subcellularLocation>
        <location evidence="1">Cell membrane</location>
        <topology evidence="1">Peripheral membrane protein</topology>
    </subcellularLocation>
</comment>
<comment type="similarity">
    <text evidence="1">Belongs to the ATPase alpha/beta chains family.</text>
</comment>
<evidence type="ECO:0000255" key="1">
    <source>
        <dbReference type="HAMAP-Rule" id="MF_00309"/>
    </source>
</evidence>
<evidence type="ECO:0007829" key="2">
    <source>
        <dbReference type="PDB" id="5BN3"/>
    </source>
</evidence>
<evidence type="ECO:0007829" key="3">
    <source>
        <dbReference type="PDB" id="5BN4"/>
    </source>
</evidence>
<evidence type="ECO:0007829" key="4">
    <source>
        <dbReference type="PDB" id="5BN5"/>
    </source>
</evidence>
<organism>
    <name type="scientific">Nanoarchaeum equitans (strain Kin4-M)</name>
    <dbReference type="NCBI Taxonomy" id="228908"/>
    <lineage>
        <taxon>Archaea</taxon>
        <taxon>Nanobdellota</taxon>
        <taxon>Candidatus Nanoarchaeia</taxon>
        <taxon>Nanoarchaeales</taxon>
        <taxon>Nanoarchaeaceae</taxon>
        <taxon>Nanoarchaeum</taxon>
    </lineage>
</organism>
<gene>
    <name evidence="1" type="primary">atpA</name>
    <name type="ordered locus">NEQ103</name>
</gene>
<reference key="1">
    <citation type="journal article" date="2003" name="Proc. Natl. Acad. Sci. U.S.A.">
        <title>The genome of Nanoarchaeum equitans: insights into early archaeal evolution and derived parasitism.</title>
        <authorList>
            <person name="Waters E."/>
            <person name="Hohn M.J."/>
            <person name="Ahel I."/>
            <person name="Graham D.E."/>
            <person name="Adams M.D."/>
            <person name="Barnstead M."/>
            <person name="Beeson K.Y."/>
            <person name="Bibbs L."/>
            <person name="Bolanos R."/>
            <person name="Keller M."/>
            <person name="Kretz K."/>
            <person name="Lin X."/>
            <person name="Mathur E."/>
            <person name="Ni J."/>
            <person name="Podar M."/>
            <person name="Richardson T."/>
            <person name="Sutton G.G."/>
            <person name="Simon M."/>
            <person name="Soell D."/>
            <person name="Stetter K.O."/>
            <person name="Short J.M."/>
            <person name="Noorderwier M."/>
        </authorList>
    </citation>
    <scope>NUCLEOTIDE SEQUENCE [LARGE SCALE GENOMIC DNA]</scope>
    <source>
        <strain>Kin4-M</strain>
    </source>
</reference>
<dbReference type="EC" id="7.1.2.2" evidence="1"/>
<dbReference type="EMBL" id="AE017199">
    <property type="protein sequence ID" value="AAR38958.1"/>
    <property type="molecule type" value="Genomic_DNA"/>
</dbReference>
<dbReference type="PDB" id="5BN3">
    <property type="method" value="X-ray"/>
    <property type="resolution" value="2.00 A"/>
    <property type="chains" value="A=1-570"/>
</dbReference>
<dbReference type="PDB" id="5BN4">
    <property type="method" value="X-ray"/>
    <property type="resolution" value="2.70 A"/>
    <property type="chains" value="A=1-570"/>
</dbReference>
<dbReference type="PDB" id="5BN5">
    <property type="method" value="X-ray"/>
    <property type="resolution" value="3.00 A"/>
    <property type="chains" value="A=1-570"/>
</dbReference>
<dbReference type="PDBsum" id="5BN3"/>
<dbReference type="PDBsum" id="5BN4"/>
<dbReference type="PDBsum" id="5BN5"/>
<dbReference type="SMR" id="Q74MJ7"/>
<dbReference type="STRING" id="228908.NEQ103"/>
<dbReference type="EnsemblBacteria" id="AAR38958">
    <property type="protein sequence ID" value="AAR38958"/>
    <property type="gene ID" value="NEQ103"/>
</dbReference>
<dbReference type="KEGG" id="neq:NEQ103"/>
<dbReference type="PATRIC" id="fig|228908.8.peg.108"/>
<dbReference type="HOGENOM" id="CLU_008162_3_1_2"/>
<dbReference type="EvolutionaryTrace" id="Q74MJ7"/>
<dbReference type="Proteomes" id="UP000000578">
    <property type="component" value="Chromosome"/>
</dbReference>
<dbReference type="GO" id="GO:0005886">
    <property type="term" value="C:plasma membrane"/>
    <property type="evidence" value="ECO:0007669"/>
    <property type="project" value="UniProtKB-SubCell"/>
</dbReference>
<dbReference type="GO" id="GO:0005524">
    <property type="term" value="F:ATP binding"/>
    <property type="evidence" value="ECO:0007669"/>
    <property type="project" value="UniProtKB-UniRule"/>
</dbReference>
<dbReference type="GO" id="GO:0046933">
    <property type="term" value="F:proton-transporting ATP synthase activity, rotational mechanism"/>
    <property type="evidence" value="ECO:0007669"/>
    <property type="project" value="UniProtKB-UniRule"/>
</dbReference>
<dbReference type="GO" id="GO:0046961">
    <property type="term" value="F:proton-transporting ATPase activity, rotational mechanism"/>
    <property type="evidence" value="ECO:0007669"/>
    <property type="project" value="InterPro"/>
</dbReference>
<dbReference type="GO" id="GO:0042777">
    <property type="term" value="P:proton motive force-driven plasma membrane ATP synthesis"/>
    <property type="evidence" value="ECO:0007669"/>
    <property type="project" value="UniProtKB-UniRule"/>
</dbReference>
<dbReference type="CDD" id="cd18111">
    <property type="entry name" value="ATP-synt_V_A-type_alpha_C"/>
    <property type="match status" value="1"/>
</dbReference>
<dbReference type="CDD" id="cd18119">
    <property type="entry name" value="ATP-synt_V_A-type_alpha_N"/>
    <property type="match status" value="1"/>
</dbReference>
<dbReference type="CDD" id="cd01134">
    <property type="entry name" value="V_A-ATPase_A"/>
    <property type="match status" value="1"/>
</dbReference>
<dbReference type="FunFam" id="2.40.50.100:FF:000008">
    <property type="entry name" value="V-type proton ATPase catalytic subunit A"/>
    <property type="match status" value="1"/>
</dbReference>
<dbReference type="Gene3D" id="2.40.30.20">
    <property type="match status" value="1"/>
</dbReference>
<dbReference type="Gene3D" id="2.40.50.100">
    <property type="match status" value="1"/>
</dbReference>
<dbReference type="Gene3D" id="1.10.1140.10">
    <property type="entry name" value="Bovine Mitochondrial F1-atpase, Atp Synthase Beta Chain, Chain D, domain 3"/>
    <property type="match status" value="1"/>
</dbReference>
<dbReference type="Gene3D" id="3.40.50.300">
    <property type="entry name" value="P-loop containing nucleotide triphosphate hydrolases"/>
    <property type="match status" value="1"/>
</dbReference>
<dbReference type="HAMAP" id="MF_00309">
    <property type="entry name" value="ATP_synth_A_arch"/>
    <property type="match status" value="1"/>
</dbReference>
<dbReference type="InterPro" id="IPR055190">
    <property type="entry name" value="ATP-synt_VA_C"/>
</dbReference>
<dbReference type="InterPro" id="IPR031686">
    <property type="entry name" value="ATP-synth_a_Xtn"/>
</dbReference>
<dbReference type="InterPro" id="IPR023366">
    <property type="entry name" value="ATP_synth_asu-like_sf"/>
</dbReference>
<dbReference type="InterPro" id="IPR004100">
    <property type="entry name" value="ATPase_F1/V1/A1_a/bsu_N"/>
</dbReference>
<dbReference type="InterPro" id="IPR036121">
    <property type="entry name" value="ATPase_F1/V1/A1_a/bsu_N_sf"/>
</dbReference>
<dbReference type="InterPro" id="IPR000194">
    <property type="entry name" value="ATPase_F1/V1/A1_a/bsu_nucl-bd"/>
</dbReference>
<dbReference type="InterPro" id="IPR024034">
    <property type="entry name" value="ATPase_F1/V1_b/a_C"/>
</dbReference>
<dbReference type="InterPro" id="IPR027417">
    <property type="entry name" value="P-loop_NTPase"/>
</dbReference>
<dbReference type="InterPro" id="IPR022878">
    <property type="entry name" value="V-ATPase_asu"/>
</dbReference>
<dbReference type="NCBIfam" id="NF003220">
    <property type="entry name" value="PRK04192.1"/>
    <property type="match status" value="1"/>
</dbReference>
<dbReference type="PANTHER" id="PTHR43607:SF1">
    <property type="entry name" value="H(+)-TRANSPORTING TWO-SECTOR ATPASE"/>
    <property type="match status" value="1"/>
</dbReference>
<dbReference type="PANTHER" id="PTHR43607">
    <property type="entry name" value="V-TYPE PROTON ATPASE CATALYTIC SUBUNIT A"/>
    <property type="match status" value="1"/>
</dbReference>
<dbReference type="Pfam" id="PF00006">
    <property type="entry name" value="ATP-synt_ab"/>
    <property type="match status" value="1"/>
</dbReference>
<dbReference type="Pfam" id="PF02874">
    <property type="entry name" value="ATP-synt_ab_N"/>
    <property type="match status" value="1"/>
</dbReference>
<dbReference type="Pfam" id="PF16886">
    <property type="entry name" value="ATP-synt_ab_Xtn"/>
    <property type="match status" value="1"/>
</dbReference>
<dbReference type="Pfam" id="PF22919">
    <property type="entry name" value="ATP-synt_VA_C"/>
    <property type="match status" value="1"/>
</dbReference>
<dbReference type="SUPFAM" id="SSF47917">
    <property type="entry name" value="C-terminal domain of alpha and beta subunits of F1 ATP synthase"/>
    <property type="match status" value="1"/>
</dbReference>
<dbReference type="SUPFAM" id="SSF50615">
    <property type="entry name" value="N-terminal domain of alpha and beta subunits of F1 ATP synthase"/>
    <property type="match status" value="1"/>
</dbReference>
<dbReference type="SUPFAM" id="SSF52540">
    <property type="entry name" value="P-loop containing nucleoside triphosphate hydrolases"/>
    <property type="match status" value="1"/>
</dbReference>
<proteinExistence type="evidence at protein level"/>
<accession>Q74MJ7</accession>
<protein>
    <recommendedName>
        <fullName evidence="1">A-type ATP synthase subunit A</fullName>
        <ecNumber evidence="1">7.1.2.2</ecNumber>
    </recommendedName>
</protein>
<feature type="chain" id="PRO_0000144602" description="A-type ATP synthase subunit A">
    <location>
        <begin position="1"/>
        <end position="570"/>
    </location>
</feature>
<feature type="binding site" evidence="1">
    <location>
        <begin position="223"/>
        <end position="230"/>
    </location>
    <ligand>
        <name>ATP</name>
        <dbReference type="ChEBI" id="CHEBI:30616"/>
    </ligand>
</feature>
<feature type="strand" evidence="2">
    <location>
        <begin position="3"/>
        <end position="8"/>
    </location>
</feature>
<feature type="strand" evidence="2">
    <location>
        <begin position="11"/>
        <end position="16"/>
    </location>
</feature>
<feature type="strand" evidence="2">
    <location>
        <begin position="23"/>
        <end position="26"/>
    </location>
</feature>
<feature type="turn" evidence="2">
    <location>
        <begin position="27"/>
        <end position="30"/>
    </location>
</feature>
<feature type="strand" evidence="2">
    <location>
        <begin position="31"/>
        <end position="39"/>
    </location>
</feature>
<feature type="strand" evidence="2">
    <location>
        <begin position="42"/>
        <end position="49"/>
    </location>
</feature>
<feature type="strand" evidence="2">
    <location>
        <begin position="55"/>
        <end position="57"/>
    </location>
</feature>
<feature type="strand" evidence="2">
    <location>
        <begin position="59"/>
        <end position="61"/>
    </location>
</feature>
<feature type="strand" evidence="2">
    <location>
        <begin position="68"/>
        <end position="72"/>
    </location>
</feature>
<feature type="strand" evidence="3">
    <location>
        <begin position="78"/>
        <end position="80"/>
    </location>
</feature>
<feature type="helix" evidence="2">
    <location>
        <begin position="87"/>
        <end position="94"/>
    </location>
</feature>
<feature type="strand" evidence="2">
    <location>
        <begin position="96"/>
        <end position="98"/>
    </location>
</feature>
<feature type="strand" evidence="2">
    <location>
        <begin position="114"/>
        <end position="120"/>
    </location>
</feature>
<feature type="strand" evidence="2">
    <location>
        <begin position="131"/>
        <end position="137"/>
    </location>
</feature>
<feature type="strand" evidence="2">
    <location>
        <begin position="140"/>
        <end position="145"/>
    </location>
</feature>
<feature type="strand" evidence="2">
    <location>
        <begin position="152"/>
        <end position="157"/>
    </location>
</feature>
<feature type="strand" evidence="2">
    <location>
        <begin position="160"/>
        <end position="162"/>
    </location>
</feature>
<feature type="strand" evidence="2">
    <location>
        <begin position="169"/>
        <end position="171"/>
    </location>
</feature>
<feature type="strand" evidence="2">
    <location>
        <begin position="174"/>
        <end position="176"/>
    </location>
</feature>
<feature type="strand" evidence="2">
    <location>
        <begin position="180"/>
        <end position="183"/>
    </location>
</feature>
<feature type="strand" evidence="2">
    <location>
        <begin position="191"/>
        <end position="193"/>
    </location>
</feature>
<feature type="helix" evidence="2">
    <location>
        <begin position="205"/>
        <end position="208"/>
    </location>
</feature>
<feature type="strand" evidence="2">
    <location>
        <begin position="218"/>
        <end position="222"/>
    </location>
</feature>
<feature type="helix" evidence="2">
    <location>
        <begin position="229"/>
        <end position="239"/>
    </location>
</feature>
<feature type="strand" evidence="2">
    <location>
        <begin position="243"/>
        <end position="251"/>
    </location>
</feature>
<feature type="helix" evidence="2">
    <location>
        <begin position="254"/>
        <end position="263"/>
    </location>
</feature>
<feature type="helix" evidence="2">
    <location>
        <begin position="264"/>
        <end position="266"/>
    </location>
</feature>
<feature type="turn" evidence="2">
    <location>
        <begin position="270"/>
        <end position="272"/>
    </location>
</feature>
<feature type="helix" evidence="2">
    <location>
        <begin position="276"/>
        <end position="279"/>
    </location>
</feature>
<feature type="strand" evidence="2">
    <location>
        <begin position="280"/>
        <end position="285"/>
    </location>
</feature>
<feature type="strand" evidence="4">
    <location>
        <begin position="287"/>
        <end position="289"/>
    </location>
</feature>
<feature type="helix" evidence="2">
    <location>
        <begin position="293"/>
        <end position="309"/>
    </location>
</feature>
<feature type="turn" evidence="2">
    <location>
        <begin position="310"/>
        <end position="312"/>
    </location>
</feature>
<feature type="strand" evidence="2">
    <location>
        <begin position="314"/>
        <end position="320"/>
    </location>
</feature>
<feature type="helix" evidence="2">
    <location>
        <begin position="322"/>
        <end position="335"/>
    </location>
</feature>
<feature type="helix" evidence="2">
    <location>
        <begin position="342"/>
        <end position="344"/>
    </location>
</feature>
<feature type="helix" evidence="2">
    <location>
        <begin position="349"/>
        <end position="357"/>
    </location>
</feature>
<feature type="strand" evidence="2">
    <location>
        <begin position="361"/>
        <end position="364"/>
    </location>
</feature>
<feature type="strand" evidence="2">
    <location>
        <begin position="370"/>
        <end position="379"/>
    </location>
</feature>
<feature type="helix" evidence="2">
    <location>
        <begin position="382"/>
        <end position="384"/>
    </location>
</feature>
<feature type="helix" evidence="2">
    <location>
        <begin position="389"/>
        <end position="395"/>
    </location>
</feature>
<feature type="strand" evidence="2">
    <location>
        <begin position="398"/>
        <end position="401"/>
    </location>
</feature>
<feature type="helix" evidence="2">
    <location>
        <begin position="406"/>
        <end position="410"/>
    </location>
</feature>
<feature type="turn" evidence="2">
    <location>
        <begin position="419"/>
        <end position="421"/>
    </location>
</feature>
<feature type="strand" evidence="2">
    <location>
        <begin position="423"/>
        <end position="425"/>
    </location>
</feature>
<feature type="helix" evidence="2">
    <location>
        <begin position="427"/>
        <end position="437"/>
    </location>
</feature>
<feature type="helix" evidence="2">
    <location>
        <begin position="441"/>
        <end position="458"/>
    </location>
</feature>
<feature type="turn" evidence="2">
    <location>
        <begin position="459"/>
        <end position="461"/>
    </location>
</feature>
<feature type="helix" evidence="2">
    <location>
        <begin position="472"/>
        <end position="487"/>
    </location>
</feature>
<feature type="strand" evidence="4">
    <location>
        <begin position="493"/>
        <end position="495"/>
    </location>
</feature>
<feature type="turn" evidence="2">
    <location>
        <begin position="496"/>
        <end position="498"/>
    </location>
</feature>
<feature type="helix" evidence="2">
    <location>
        <begin position="503"/>
        <end position="523"/>
    </location>
</feature>
<feature type="helix" evidence="2">
    <location>
        <begin position="529"/>
        <end position="533"/>
    </location>
</feature>
<feature type="helix" evidence="2">
    <location>
        <begin position="537"/>
        <end position="542"/>
    </location>
</feature>
<feature type="helix" evidence="2">
    <location>
        <begin position="544"/>
        <end position="546"/>
    </location>
</feature>
<feature type="helix" evidence="2">
    <location>
        <begin position="552"/>
        <end position="562"/>
    </location>
</feature>